<keyword id="KW-0963">Cytoplasm</keyword>
<keyword id="KW-0342">GTP-binding</keyword>
<keyword id="KW-0547">Nucleotide-binding</keyword>
<keyword id="KW-0648">Protein biosynthesis</keyword>
<dbReference type="EMBL" id="AM181176">
    <property type="protein sequence ID" value="CAY47084.1"/>
    <property type="molecule type" value="Genomic_DNA"/>
</dbReference>
<dbReference type="RefSeq" id="WP_012722183.1">
    <property type="nucleotide sequence ID" value="NC_012660.1"/>
</dbReference>
<dbReference type="SMR" id="C3K5A9"/>
<dbReference type="STRING" id="294.SRM1_00855"/>
<dbReference type="eggNOG" id="COG4108">
    <property type="taxonomic scope" value="Bacteria"/>
</dbReference>
<dbReference type="HOGENOM" id="CLU_002794_2_1_6"/>
<dbReference type="OrthoDB" id="9801472at2"/>
<dbReference type="GO" id="GO:0005829">
    <property type="term" value="C:cytosol"/>
    <property type="evidence" value="ECO:0007669"/>
    <property type="project" value="TreeGrafter"/>
</dbReference>
<dbReference type="GO" id="GO:0005525">
    <property type="term" value="F:GTP binding"/>
    <property type="evidence" value="ECO:0007669"/>
    <property type="project" value="UniProtKB-UniRule"/>
</dbReference>
<dbReference type="GO" id="GO:0003924">
    <property type="term" value="F:GTPase activity"/>
    <property type="evidence" value="ECO:0007669"/>
    <property type="project" value="InterPro"/>
</dbReference>
<dbReference type="GO" id="GO:0097216">
    <property type="term" value="F:guanosine tetraphosphate binding"/>
    <property type="evidence" value="ECO:0007669"/>
    <property type="project" value="UniProtKB-ARBA"/>
</dbReference>
<dbReference type="GO" id="GO:0016150">
    <property type="term" value="F:translation release factor activity, codon nonspecific"/>
    <property type="evidence" value="ECO:0007669"/>
    <property type="project" value="TreeGrafter"/>
</dbReference>
<dbReference type="GO" id="GO:0016149">
    <property type="term" value="F:translation release factor activity, codon specific"/>
    <property type="evidence" value="ECO:0007669"/>
    <property type="project" value="UniProtKB-UniRule"/>
</dbReference>
<dbReference type="GO" id="GO:0006449">
    <property type="term" value="P:regulation of translational termination"/>
    <property type="evidence" value="ECO:0007669"/>
    <property type="project" value="UniProtKB-UniRule"/>
</dbReference>
<dbReference type="CDD" id="cd04169">
    <property type="entry name" value="RF3"/>
    <property type="match status" value="1"/>
</dbReference>
<dbReference type="CDD" id="cd03689">
    <property type="entry name" value="RF3_II"/>
    <property type="match status" value="1"/>
</dbReference>
<dbReference type="CDD" id="cd16259">
    <property type="entry name" value="RF3_III"/>
    <property type="match status" value="1"/>
</dbReference>
<dbReference type="FunFam" id="2.40.30.10:FF:000040">
    <property type="entry name" value="Peptide chain release factor 3"/>
    <property type="match status" value="1"/>
</dbReference>
<dbReference type="FunFam" id="3.30.70.3280:FF:000001">
    <property type="entry name" value="Peptide chain release factor 3"/>
    <property type="match status" value="1"/>
</dbReference>
<dbReference type="FunFam" id="3.40.50.300:FF:000542">
    <property type="entry name" value="Peptide chain release factor 3"/>
    <property type="match status" value="1"/>
</dbReference>
<dbReference type="Gene3D" id="3.40.50.300">
    <property type="entry name" value="P-loop containing nucleotide triphosphate hydrolases"/>
    <property type="match status" value="2"/>
</dbReference>
<dbReference type="Gene3D" id="3.30.70.3280">
    <property type="entry name" value="Peptide chain release factor 3, domain III"/>
    <property type="match status" value="1"/>
</dbReference>
<dbReference type="HAMAP" id="MF_00072">
    <property type="entry name" value="Rel_fac_3"/>
    <property type="match status" value="1"/>
</dbReference>
<dbReference type="InterPro" id="IPR053905">
    <property type="entry name" value="EF-G-like_DII"/>
</dbReference>
<dbReference type="InterPro" id="IPR035647">
    <property type="entry name" value="EFG_III/V"/>
</dbReference>
<dbReference type="InterPro" id="IPR031157">
    <property type="entry name" value="G_TR_CS"/>
</dbReference>
<dbReference type="InterPro" id="IPR027417">
    <property type="entry name" value="P-loop_NTPase"/>
</dbReference>
<dbReference type="InterPro" id="IPR004548">
    <property type="entry name" value="PrfC"/>
</dbReference>
<dbReference type="InterPro" id="IPR032090">
    <property type="entry name" value="RF3_C"/>
</dbReference>
<dbReference type="InterPro" id="IPR038467">
    <property type="entry name" value="RF3_dom_3_sf"/>
</dbReference>
<dbReference type="InterPro" id="IPR041732">
    <property type="entry name" value="RF3_GTP-bd"/>
</dbReference>
<dbReference type="InterPro" id="IPR005225">
    <property type="entry name" value="Small_GTP-bd"/>
</dbReference>
<dbReference type="InterPro" id="IPR000795">
    <property type="entry name" value="T_Tr_GTP-bd_dom"/>
</dbReference>
<dbReference type="InterPro" id="IPR009000">
    <property type="entry name" value="Transl_B-barrel_sf"/>
</dbReference>
<dbReference type="NCBIfam" id="TIGR00503">
    <property type="entry name" value="prfC"/>
    <property type="match status" value="1"/>
</dbReference>
<dbReference type="NCBIfam" id="NF001964">
    <property type="entry name" value="PRK00741.1"/>
    <property type="match status" value="1"/>
</dbReference>
<dbReference type="NCBIfam" id="TIGR00231">
    <property type="entry name" value="small_GTP"/>
    <property type="match status" value="1"/>
</dbReference>
<dbReference type="PANTHER" id="PTHR43556">
    <property type="entry name" value="PEPTIDE CHAIN RELEASE FACTOR RF3"/>
    <property type="match status" value="1"/>
</dbReference>
<dbReference type="PANTHER" id="PTHR43556:SF2">
    <property type="entry name" value="PEPTIDE CHAIN RELEASE FACTOR RF3"/>
    <property type="match status" value="1"/>
</dbReference>
<dbReference type="Pfam" id="PF22042">
    <property type="entry name" value="EF-G_D2"/>
    <property type="match status" value="1"/>
</dbReference>
<dbReference type="Pfam" id="PF00009">
    <property type="entry name" value="GTP_EFTU"/>
    <property type="match status" value="1"/>
</dbReference>
<dbReference type="Pfam" id="PF16658">
    <property type="entry name" value="RF3_C"/>
    <property type="match status" value="1"/>
</dbReference>
<dbReference type="PRINTS" id="PR00315">
    <property type="entry name" value="ELONGATNFCT"/>
</dbReference>
<dbReference type="SUPFAM" id="SSF54980">
    <property type="entry name" value="EF-G C-terminal domain-like"/>
    <property type="match status" value="1"/>
</dbReference>
<dbReference type="SUPFAM" id="SSF52540">
    <property type="entry name" value="P-loop containing nucleoside triphosphate hydrolases"/>
    <property type="match status" value="1"/>
</dbReference>
<dbReference type="SUPFAM" id="SSF50447">
    <property type="entry name" value="Translation proteins"/>
    <property type="match status" value="1"/>
</dbReference>
<dbReference type="PROSITE" id="PS00301">
    <property type="entry name" value="G_TR_1"/>
    <property type="match status" value="1"/>
</dbReference>
<dbReference type="PROSITE" id="PS51722">
    <property type="entry name" value="G_TR_2"/>
    <property type="match status" value="1"/>
</dbReference>
<name>RF3_PSEFS</name>
<organism>
    <name type="scientific">Pseudomonas fluorescens (strain SBW25)</name>
    <dbReference type="NCBI Taxonomy" id="216595"/>
    <lineage>
        <taxon>Bacteria</taxon>
        <taxon>Pseudomonadati</taxon>
        <taxon>Pseudomonadota</taxon>
        <taxon>Gammaproteobacteria</taxon>
        <taxon>Pseudomonadales</taxon>
        <taxon>Pseudomonadaceae</taxon>
        <taxon>Pseudomonas</taxon>
    </lineage>
</organism>
<protein>
    <recommendedName>
        <fullName evidence="1">Peptide chain release factor 3</fullName>
        <shortName evidence="1">RF-3</shortName>
    </recommendedName>
</protein>
<sequence>MTHQAAEVAKRRTFAIISHPDAGKTTITEKLLLMGKAIAVAGTVKSRKSDRHATSDWMEMEKQRGISITTSVMQFPYRDHMVNLLDTPGHEDFSEDTYRTLTAVDSALMVLDGGKGVEPRTIALMDVCRLRDTPIVSFINKLDRDIRDPIELLDEIEAVLKIKAAPITWPIGCYRDFKGVYHLADDYIIVYTAGHGHERTDVKIIEKLDSDEARAHLGDEYDRFVDQLELVQGACHAFNQQEFLDGQLTPVFFGTALGNFGVDHVLDAVVDWAPRPLPRVANERTVEPVEEKFSGFVFKIQANMDPKHRDRIAFMRICSGKYDKGMKMRHVRTGKDVRIGDALTFFSSEREQLEEAFAGDIIGLHNHGTIQIGDTFTEGESLSFTGIPHFAPELFRRVRLRDPLKSKQLRQGLQQLAEEGATQVFFPERSNDIILGAVGVLQFDVVASRLKEEYKVECSYEPITVYSARWIDCSDKKKLEEFSNKAVENLAVDGGGHLTYLAPTRVNLALMEERWPDVKFRATREHH</sequence>
<feature type="chain" id="PRO_1000202470" description="Peptide chain release factor 3">
    <location>
        <begin position="1"/>
        <end position="527"/>
    </location>
</feature>
<feature type="domain" description="tr-type G">
    <location>
        <begin position="9"/>
        <end position="277"/>
    </location>
</feature>
<feature type="binding site" evidence="1">
    <location>
        <begin position="18"/>
        <end position="25"/>
    </location>
    <ligand>
        <name>GTP</name>
        <dbReference type="ChEBI" id="CHEBI:37565"/>
    </ligand>
</feature>
<feature type="binding site" evidence="1">
    <location>
        <begin position="86"/>
        <end position="90"/>
    </location>
    <ligand>
        <name>GTP</name>
        <dbReference type="ChEBI" id="CHEBI:37565"/>
    </ligand>
</feature>
<feature type="binding site" evidence="1">
    <location>
        <begin position="140"/>
        <end position="143"/>
    </location>
    <ligand>
        <name>GTP</name>
        <dbReference type="ChEBI" id="CHEBI:37565"/>
    </ligand>
</feature>
<reference key="1">
    <citation type="journal article" date="2009" name="Genome Biol.">
        <title>Genomic and genetic analyses of diversity and plant interactions of Pseudomonas fluorescens.</title>
        <authorList>
            <person name="Silby M.W."/>
            <person name="Cerdeno-Tarraga A.M."/>
            <person name="Vernikos G.S."/>
            <person name="Giddens S.R."/>
            <person name="Jackson R.W."/>
            <person name="Preston G.M."/>
            <person name="Zhang X.-X."/>
            <person name="Moon C.D."/>
            <person name="Gehrig S.M."/>
            <person name="Godfrey S.A.C."/>
            <person name="Knight C.G."/>
            <person name="Malone J.G."/>
            <person name="Robinson Z."/>
            <person name="Spiers A.J."/>
            <person name="Harris S."/>
            <person name="Challis G.L."/>
            <person name="Yaxley A.M."/>
            <person name="Harris D."/>
            <person name="Seeger K."/>
            <person name="Murphy L."/>
            <person name="Rutter S."/>
            <person name="Squares R."/>
            <person name="Quail M.A."/>
            <person name="Saunders E."/>
            <person name="Mavromatis K."/>
            <person name="Brettin T.S."/>
            <person name="Bentley S.D."/>
            <person name="Hothersall J."/>
            <person name="Stephens E."/>
            <person name="Thomas C.M."/>
            <person name="Parkhill J."/>
            <person name="Levy S.B."/>
            <person name="Rainey P.B."/>
            <person name="Thomson N.R."/>
        </authorList>
    </citation>
    <scope>NUCLEOTIDE SEQUENCE [LARGE SCALE GENOMIC DNA]</scope>
    <source>
        <strain>SBW25</strain>
    </source>
</reference>
<comment type="function">
    <text evidence="1">Increases the formation of ribosomal termination complexes and stimulates activities of RF-1 and RF-2. It binds guanine nucleotides and has strong preference for UGA stop codons. It may interact directly with the ribosome. The stimulation of RF-1 and RF-2 is significantly reduced by GTP and GDP, but not by GMP.</text>
</comment>
<comment type="subcellular location">
    <subcellularLocation>
        <location evidence="1">Cytoplasm</location>
    </subcellularLocation>
</comment>
<comment type="similarity">
    <text evidence="1">Belongs to the TRAFAC class translation factor GTPase superfamily. Classic translation factor GTPase family. PrfC subfamily.</text>
</comment>
<evidence type="ECO:0000255" key="1">
    <source>
        <dbReference type="HAMAP-Rule" id="MF_00072"/>
    </source>
</evidence>
<accession>C3K5A9</accession>
<gene>
    <name evidence="1" type="primary">prfC</name>
    <name type="ordered locus">PFLU_0816</name>
</gene>
<proteinExistence type="inferred from homology"/>